<reference key="1">
    <citation type="journal article" date="1985" name="Eur. J. Biochem.">
        <title>Nucleotide sequence and high-level expression of the major Escherichia coli phosphofructokinase.</title>
        <authorList>
            <person name="Hellinga H.W."/>
            <person name="Evans P.R."/>
        </authorList>
    </citation>
    <scope>NUCLEOTIDE SEQUENCE [GENOMIC DNA]</scope>
</reference>
<reference key="2">
    <citation type="submission" date="1986-10" db="EMBL/GenBank/DDBJ databases">
        <authorList>
            <person name="Evans P.R."/>
        </authorList>
    </citation>
    <scope>SEQUENCE REVISION</scope>
</reference>
<reference key="3">
    <citation type="journal article" date="1991" name="J. Biol. Chem.">
        <title>Engineered interdomain disulfide in the periplasmic receptor for sulfate transport reduces flexibility. Site-directed mutagenesis and ligand-binding studies.</title>
        <authorList>
            <person name="Jacobson B.L."/>
            <person name="He J.J."/>
            <person name="Vermersch P.S."/>
            <person name="Lemon D.D."/>
            <person name="Quiocho F.A."/>
        </authorList>
    </citation>
    <scope>SEQUENCE REVISION TO 152-164; 176-178 AND 201-203</scope>
    <scope>MUTAGENESIS</scope>
</reference>
<reference key="4">
    <citation type="journal article" date="1993" name="Nucleic Acids Res.">
        <title>Analysis of the Escherichia coli genome. III. DNA sequence of the region from 87.2 to 89.2 minutes.</title>
        <authorList>
            <person name="Plunkett G. III"/>
            <person name="Burland V."/>
            <person name="Daniels D.L."/>
            <person name="Blattner F.R."/>
        </authorList>
    </citation>
    <scope>NUCLEOTIDE SEQUENCE [LARGE SCALE GENOMIC DNA]</scope>
    <source>
        <strain>K12 / MG1655 / ATCC 47076</strain>
    </source>
</reference>
<reference key="5">
    <citation type="journal article" date="1997" name="Science">
        <title>The complete genome sequence of Escherichia coli K-12.</title>
        <authorList>
            <person name="Blattner F.R."/>
            <person name="Plunkett G. III"/>
            <person name="Bloch C.A."/>
            <person name="Perna N.T."/>
            <person name="Burland V."/>
            <person name="Riley M."/>
            <person name="Collado-Vides J."/>
            <person name="Glasner J.D."/>
            <person name="Rode C.K."/>
            <person name="Mayhew G.F."/>
            <person name="Gregor J."/>
            <person name="Davis N.W."/>
            <person name="Kirkpatrick H.A."/>
            <person name="Goeden M.A."/>
            <person name="Rose D.J."/>
            <person name="Mau B."/>
            <person name="Shao Y."/>
        </authorList>
    </citation>
    <scope>NUCLEOTIDE SEQUENCE [LARGE SCALE GENOMIC DNA]</scope>
    <source>
        <strain>K12 / MG1655 / ATCC 47076</strain>
    </source>
</reference>
<reference key="6">
    <citation type="journal article" date="2006" name="Mol. Syst. Biol.">
        <title>Highly accurate genome sequences of Escherichia coli K-12 strains MG1655 and W3110.</title>
        <authorList>
            <person name="Hayashi K."/>
            <person name="Morooka N."/>
            <person name="Yamamoto Y."/>
            <person name="Fujita K."/>
            <person name="Isono K."/>
            <person name="Choi S."/>
            <person name="Ohtsubo E."/>
            <person name="Baba T."/>
            <person name="Wanner B.L."/>
            <person name="Mori H."/>
            <person name="Horiuchi T."/>
        </authorList>
    </citation>
    <scope>NUCLEOTIDE SEQUENCE [LARGE SCALE GENOMIC DNA]</scope>
    <source>
        <strain>K12 / W3110 / ATCC 27325 / DSM 5911</strain>
    </source>
</reference>
<reference key="7">
    <citation type="journal article" date="1997" name="Electrophoresis">
        <title>Comparing the predicted and observed properties of proteins encoded in the genome of Escherichia coli K-12.</title>
        <authorList>
            <person name="Link A.J."/>
            <person name="Robison K."/>
            <person name="Church G.M."/>
        </authorList>
    </citation>
    <scope>PROTEIN SEQUENCE OF 20-31</scope>
    <source>
        <strain>K12 / EMG2</strain>
    </source>
</reference>
<reference key="8">
    <citation type="journal article" date="1996" name="Eur. J. Biochem.">
        <title>Analysis of global responses by protein and peptide fingerprinting of proteins isolated by two-dimensional gel electrophoresis. Application to the sulfate-starvation response of Escherichia coli.</title>
        <authorList>
            <person name="Quadroni M."/>
            <person name="Staudenmann W."/>
            <person name="Kertesz M.A."/>
            <person name="James P."/>
        </authorList>
    </citation>
    <scope>PROTEIN SEQUENCE OF 20-29; 42-48; 256-263; 265-273 AND 277-282</scope>
    <source>
        <strain>K12 / MC4100 / ATCC 35695 / DSM 6574</strain>
    </source>
</reference>
<organism>
    <name type="scientific">Escherichia coli (strain K12)</name>
    <dbReference type="NCBI Taxonomy" id="83333"/>
    <lineage>
        <taxon>Bacteria</taxon>
        <taxon>Pseudomonadati</taxon>
        <taxon>Pseudomonadota</taxon>
        <taxon>Gammaproteobacteria</taxon>
        <taxon>Enterobacterales</taxon>
        <taxon>Enterobacteriaceae</taxon>
        <taxon>Escherichia</taxon>
    </lineage>
</organism>
<proteinExistence type="evidence at protein level"/>
<comment type="function">
    <text>This protein specifically binds sulfate and is involved in its transmembrane transport.</text>
</comment>
<comment type="subcellular location">
    <subcellularLocation>
        <location>Periplasm</location>
    </subcellularLocation>
</comment>
<comment type="induction">
    <text>Repressed by sulfate or cysteine.</text>
</comment>
<comment type="similarity">
    <text evidence="3">Belongs to the prokaryotic sulfate-binding protein family.</text>
</comment>
<sequence>MNKWGVGLTFLLAATSVMAKDIQLLNVSYDPTRELYEQYNKAFSAHWKQQTGDNVVIRQSHGGSGKQATSVINGIEADVVTLALAYDVDAIAERGRIDKEWIKRLPDNSAPYTSTIVFLVRKGNPKQIHDWNDLIKPGVSVITPNPKSSGGARWNYLAAWGYALHHNNNDQAKAQDFVRALYKNVEVLDSGARGSTNTFVERGIGDVLIAWENEALLAANELGKDKFEIVTPSESILAEPTVSVVDKVVEKKGTKEVAEAYLKYLYSPEGQEIAAKNYYRPRDAEVAKKYENAFPKLKLFTIDEEFGGWTKAQKEHFANGGTFDQISKR</sequence>
<name>SUBI_ECOLI</name>
<keyword id="KW-0903">Direct protein sequencing</keyword>
<keyword id="KW-0574">Periplasm</keyword>
<keyword id="KW-1185">Reference proteome</keyword>
<keyword id="KW-0732">Signal</keyword>
<keyword id="KW-0764">Sulfate transport</keyword>
<keyword id="KW-0813">Transport</keyword>
<feature type="signal peptide" evidence="1 2">
    <location>
        <begin position="1"/>
        <end position="19"/>
    </location>
</feature>
<feature type="chain" id="PRO_0000031683" description="Sulfate-binding protein">
    <location>
        <begin position="20"/>
        <end position="329"/>
    </location>
</feature>
<feature type="sequence conflict" description="In Ref. 1; CAA26357." evidence="3" ref="1">
    <original>V</original>
    <variation>E</variation>
    <location>
        <position position="185"/>
    </location>
</feature>
<gene>
    <name type="primary">sbp</name>
    <name type="ordered locus">b3917</name>
    <name type="ordered locus">JW3888</name>
</gene>
<dbReference type="EMBL" id="X02519">
    <property type="protein sequence ID" value="CAA26357.1"/>
    <property type="status" value="ALT_SEQ"/>
    <property type="molecule type" value="Genomic_DNA"/>
</dbReference>
<dbReference type="EMBL" id="L19201">
    <property type="protein sequence ID" value="AAB03049.1"/>
    <property type="molecule type" value="Genomic_DNA"/>
</dbReference>
<dbReference type="EMBL" id="U00096">
    <property type="protein sequence ID" value="AAC76899.1"/>
    <property type="molecule type" value="Genomic_DNA"/>
</dbReference>
<dbReference type="EMBL" id="AP009048">
    <property type="protein sequence ID" value="BAE77393.1"/>
    <property type="molecule type" value="Genomic_DNA"/>
</dbReference>
<dbReference type="PIR" id="S40860">
    <property type="entry name" value="BYEC"/>
</dbReference>
<dbReference type="RefSeq" id="NP_418352.1">
    <property type="nucleotide sequence ID" value="NC_000913.3"/>
</dbReference>
<dbReference type="RefSeq" id="WP_001045689.1">
    <property type="nucleotide sequence ID" value="NZ_SSUV01000029.1"/>
</dbReference>
<dbReference type="SMR" id="P0AG78"/>
<dbReference type="BioGRID" id="4261220">
    <property type="interactions" value="42"/>
</dbReference>
<dbReference type="ComplexPortal" id="CPX-4386">
    <property type="entry name" value="Sulfate/thiosulfate ABC transporter complex, sbp variant"/>
</dbReference>
<dbReference type="DIP" id="DIP-35843N"/>
<dbReference type="FunCoup" id="P0AG78">
    <property type="interactions" value="248"/>
</dbReference>
<dbReference type="IntAct" id="P0AG78">
    <property type="interactions" value="11"/>
</dbReference>
<dbReference type="STRING" id="511145.b3917"/>
<dbReference type="TCDB" id="3.A.1.6.1">
    <property type="family name" value="the atp-binding cassette (abc) superfamily"/>
</dbReference>
<dbReference type="PaxDb" id="511145-b3917"/>
<dbReference type="EnsemblBacteria" id="AAC76899">
    <property type="protein sequence ID" value="AAC76899"/>
    <property type="gene ID" value="b3917"/>
</dbReference>
<dbReference type="GeneID" id="93777981"/>
<dbReference type="GeneID" id="948411"/>
<dbReference type="KEGG" id="ecj:JW3888"/>
<dbReference type="KEGG" id="eco:b3917"/>
<dbReference type="KEGG" id="ecoc:C3026_21175"/>
<dbReference type="PATRIC" id="fig|1411691.4.peg.2788"/>
<dbReference type="EchoBASE" id="EB0922"/>
<dbReference type="eggNOG" id="COG1613">
    <property type="taxonomic scope" value="Bacteria"/>
</dbReference>
<dbReference type="HOGENOM" id="CLU_055615_0_1_6"/>
<dbReference type="InParanoid" id="P0AG78"/>
<dbReference type="OMA" id="DKHGTRK"/>
<dbReference type="OrthoDB" id="9802127at2"/>
<dbReference type="PhylomeDB" id="P0AG78"/>
<dbReference type="BioCyc" id="EcoCyc:SBP-MONOMER"/>
<dbReference type="BioCyc" id="MetaCyc:SBP-MONOMER"/>
<dbReference type="PRO" id="PR:P0AG78"/>
<dbReference type="Proteomes" id="UP000000625">
    <property type="component" value="Chromosome"/>
</dbReference>
<dbReference type="GO" id="GO:0035796">
    <property type="term" value="C:ATP-binding cassette (ABC) transporter complex, transmembrane substrate-binding subunit-containing"/>
    <property type="evidence" value="ECO:0000303"/>
    <property type="project" value="ComplexPortal"/>
</dbReference>
<dbReference type="GO" id="GO:0005615">
    <property type="term" value="C:extracellular space"/>
    <property type="evidence" value="ECO:0000318"/>
    <property type="project" value="GO_Central"/>
</dbReference>
<dbReference type="GO" id="GO:0016020">
    <property type="term" value="C:membrane"/>
    <property type="evidence" value="ECO:0000303"/>
    <property type="project" value="ComplexPortal"/>
</dbReference>
<dbReference type="GO" id="GO:0030288">
    <property type="term" value="C:outer membrane-bounded periplasmic space"/>
    <property type="evidence" value="ECO:0000314"/>
    <property type="project" value="EcoCyc"/>
</dbReference>
<dbReference type="GO" id="GO:0140104">
    <property type="term" value="F:molecular carrier activity"/>
    <property type="evidence" value="ECO:0007669"/>
    <property type="project" value="InterPro"/>
</dbReference>
<dbReference type="GO" id="GO:0043199">
    <property type="term" value="F:sulfate binding"/>
    <property type="evidence" value="ECO:0000314"/>
    <property type="project" value="EcoCyc"/>
</dbReference>
<dbReference type="GO" id="GO:1902358">
    <property type="term" value="P:sulfate transmembrane transport"/>
    <property type="evidence" value="ECO:0000303"/>
    <property type="project" value="ComplexPortal"/>
</dbReference>
<dbReference type="GO" id="GO:0006790">
    <property type="term" value="P:sulfur compound metabolic process"/>
    <property type="evidence" value="ECO:0000314"/>
    <property type="project" value="EcoCyc"/>
</dbReference>
<dbReference type="GO" id="GO:0015709">
    <property type="term" value="P:thiosulfate transport"/>
    <property type="evidence" value="ECO:0000303"/>
    <property type="project" value="ComplexPortal"/>
</dbReference>
<dbReference type="CDD" id="cd01005">
    <property type="entry name" value="PBP2_CysP"/>
    <property type="match status" value="1"/>
</dbReference>
<dbReference type="Gene3D" id="3.40.190.10">
    <property type="entry name" value="Periplasmic binding protein-like II"/>
    <property type="match status" value="2"/>
</dbReference>
<dbReference type="InterPro" id="IPR000957">
    <property type="entry name" value="Sulphate/thiosulphate-bd_CS"/>
</dbReference>
<dbReference type="InterPro" id="IPR034408">
    <property type="entry name" value="Sulphate/thiosulphate_BS"/>
</dbReference>
<dbReference type="InterPro" id="IPR005669">
    <property type="entry name" value="Thiosulph/SO4-bd"/>
</dbReference>
<dbReference type="NCBIfam" id="TIGR00971">
    <property type="entry name" value="3a0106s03"/>
    <property type="match status" value="1"/>
</dbReference>
<dbReference type="NCBIfam" id="NF008022">
    <property type="entry name" value="PRK10752.1"/>
    <property type="match status" value="1"/>
</dbReference>
<dbReference type="NCBIfam" id="NF008106">
    <property type="entry name" value="PRK10852.1"/>
    <property type="match status" value="1"/>
</dbReference>
<dbReference type="PANTHER" id="PTHR30368">
    <property type="entry name" value="SULFATE-BINDING PROTEIN"/>
    <property type="match status" value="1"/>
</dbReference>
<dbReference type="PANTHER" id="PTHR30368:SF2">
    <property type="entry name" value="SULFATE-BINDING PROTEIN"/>
    <property type="match status" value="1"/>
</dbReference>
<dbReference type="Pfam" id="PF13531">
    <property type="entry name" value="SBP_bac_11"/>
    <property type="match status" value="1"/>
</dbReference>
<dbReference type="SUPFAM" id="SSF53850">
    <property type="entry name" value="Periplasmic binding protein-like II"/>
    <property type="match status" value="1"/>
</dbReference>
<dbReference type="PROSITE" id="PS00401">
    <property type="entry name" value="PROK_SULFATE_BIND_1"/>
    <property type="match status" value="1"/>
</dbReference>
<dbReference type="PROSITE" id="PS00757">
    <property type="entry name" value="PROK_SULFATE_BIND_2"/>
    <property type="match status" value="1"/>
</dbReference>
<accession>P0AG78</accession>
<accession>P06997</accession>
<accession>Q2M8L3</accession>
<protein>
    <recommendedName>
        <fullName>Sulfate-binding protein</fullName>
    </recommendedName>
    <alternativeName>
        <fullName>Sulfate starvation-induced protein 2</fullName>
        <shortName>SSI2</shortName>
    </alternativeName>
</protein>
<evidence type="ECO:0000269" key="1">
    <source>
    </source>
</evidence>
<evidence type="ECO:0000269" key="2">
    <source>
    </source>
</evidence>
<evidence type="ECO:0000305" key="3"/>